<accession>Q43315</accession>
<comment type="function">
    <text>Catalyzes the sequential condensation of isopentenyl pyrophosphate with the allylic pyrophosphates, dimethylallyl pyrophosphate, and then with the resultant geranylpyrophosphate to the ultimate product farnesyl pyrophosphate.</text>
</comment>
<comment type="catalytic activity">
    <reaction>
        <text>isopentenyl diphosphate + dimethylallyl diphosphate = (2E)-geranyl diphosphate + diphosphate</text>
        <dbReference type="Rhea" id="RHEA:22408"/>
        <dbReference type="ChEBI" id="CHEBI:33019"/>
        <dbReference type="ChEBI" id="CHEBI:57623"/>
        <dbReference type="ChEBI" id="CHEBI:58057"/>
        <dbReference type="ChEBI" id="CHEBI:128769"/>
        <dbReference type="EC" id="2.5.1.1"/>
    </reaction>
</comment>
<comment type="catalytic activity">
    <reaction>
        <text>isopentenyl diphosphate + (2E)-geranyl diphosphate = (2E,6E)-farnesyl diphosphate + diphosphate</text>
        <dbReference type="Rhea" id="RHEA:19361"/>
        <dbReference type="ChEBI" id="CHEBI:33019"/>
        <dbReference type="ChEBI" id="CHEBI:58057"/>
        <dbReference type="ChEBI" id="CHEBI:128769"/>
        <dbReference type="ChEBI" id="CHEBI:175763"/>
        <dbReference type="EC" id="2.5.1.10"/>
    </reaction>
</comment>
<comment type="cofactor">
    <cofactor evidence="1">
        <name>Mg(2+)</name>
        <dbReference type="ChEBI" id="CHEBI:18420"/>
    </cofactor>
    <text evidence="1">Binds 2 Mg(2+) ions per subunit.</text>
</comment>
<comment type="pathway">
    <text>Isoprenoid biosynthesis; farnesyl diphosphate biosynthesis; farnesyl diphosphate from geranyl diphosphate and isopentenyl diphosphate: step 1/1.</text>
</comment>
<comment type="pathway">
    <text>Isoprenoid biosynthesis; geranyl diphosphate biosynthesis; geranyl diphosphate from dimethylallyl diphosphate and isopentenyl diphosphate: step 1/1.</text>
</comment>
<comment type="subcellular location">
    <subcellularLocation>
        <location>Cytoplasm</location>
    </subcellularLocation>
</comment>
<comment type="alternative products">
    <event type="alternative splicing"/>
    <isoform>
        <id>Q43315-1</id>
        <name>1</name>
        <sequence type="displayed"/>
    </isoform>
    <text>A number of isoforms are produced. According to EST sequences.</text>
</comment>
<comment type="similarity">
    <text evidence="3">Belongs to the FPP/GGPP synthase family.</text>
</comment>
<evidence type="ECO:0000250" key="1"/>
<evidence type="ECO:0000250" key="2">
    <source>
        <dbReference type="UniProtKB" id="P14324"/>
    </source>
</evidence>
<evidence type="ECO:0000305" key="3"/>
<feature type="chain" id="PRO_0000123953" description="Farnesyl pyrophosphate synthase 2">
    <location>
        <begin position="1"/>
        <end position="342"/>
    </location>
</feature>
<feature type="binding site" evidence="2">
    <location>
        <position position="47"/>
    </location>
    <ligand>
        <name>isopentenyl diphosphate</name>
        <dbReference type="ChEBI" id="CHEBI:128769"/>
    </ligand>
</feature>
<feature type="binding site" evidence="2">
    <location>
        <position position="50"/>
    </location>
    <ligand>
        <name>isopentenyl diphosphate</name>
        <dbReference type="ChEBI" id="CHEBI:128769"/>
    </ligand>
</feature>
<feature type="binding site" evidence="2">
    <location>
        <position position="86"/>
    </location>
    <ligand>
        <name>isopentenyl diphosphate</name>
        <dbReference type="ChEBI" id="CHEBI:128769"/>
    </ligand>
</feature>
<feature type="binding site" evidence="2">
    <location>
        <position position="93"/>
    </location>
    <ligand>
        <name>Mg(2+)</name>
        <dbReference type="ChEBI" id="CHEBI:18420"/>
        <label>1</label>
    </ligand>
</feature>
<feature type="binding site" evidence="2">
    <location>
        <position position="93"/>
    </location>
    <ligand>
        <name>Mg(2+)</name>
        <dbReference type="ChEBI" id="CHEBI:18420"/>
        <label>2</label>
    </ligand>
</feature>
<feature type="binding site" evidence="2">
    <location>
        <position position="97"/>
    </location>
    <ligand>
        <name>Mg(2+)</name>
        <dbReference type="ChEBI" id="CHEBI:18420"/>
        <label>1</label>
    </ligand>
</feature>
<feature type="binding site" evidence="2">
    <location>
        <position position="97"/>
    </location>
    <ligand>
        <name>Mg(2+)</name>
        <dbReference type="ChEBI" id="CHEBI:18420"/>
        <label>2</label>
    </ligand>
</feature>
<feature type="binding site" evidence="1">
    <location>
        <position position="102"/>
    </location>
    <ligand>
        <name>dimethylallyl diphosphate</name>
        <dbReference type="ChEBI" id="CHEBI:57623"/>
    </ligand>
</feature>
<feature type="binding site" evidence="2">
    <location>
        <position position="103"/>
    </location>
    <ligand>
        <name>isopentenyl diphosphate</name>
        <dbReference type="ChEBI" id="CHEBI:128769"/>
    </ligand>
</feature>
<feature type="binding site" evidence="1">
    <location>
        <position position="190"/>
    </location>
    <ligand>
        <name>dimethylallyl diphosphate</name>
        <dbReference type="ChEBI" id="CHEBI:57623"/>
    </ligand>
</feature>
<feature type="binding site" evidence="1">
    <location>
        <position position="191"/>
    </location>
    <ligand>
        <name>dimethylallyl diphosphate</name>
        <dbReference type="ChEBI" id="CHEBI:57623"/>
    </ligand>
</feature>
<feature type="binding site" evidence="1">
    <location>
        <position position="229"/>
    </location>
    <ligand>
        <name>dimethylallyl diphosphate</name>
        <dbReference type="ChEBI" id="CHEBI:57623"/>
    </ligand>
</feature>
<feature type="binding site" evidence="1">
    <location>
        <position position="246"/>
    </location>
    <ligand>
        <name>dimethylallyl diphosphate</name>
        <dbReference type="ChEBI" id="CHEBI:57623"/>
    </ligand>
</feature>
<feature type="binding site" evidence="1">
    <location>
        <position position="255"/>
    </location>
    <ligand>
        <name>dimethylallyl diphosphate</name>
        <dbReference type="ChEBI" id="CHEBI:57623"/>
    </ligand>
</feature>
<gene>
    <name type="primary">FPS2</name>
    <name type="ordered locus">At4g17190</name>
    <name type="ORF">dl4630c</name>
</gene>
<reference key="1">
    <citation type="journal article" date="1996" name="J. Biol. Chem.">
        <title>Arabidopsis thaliana contains two differentially expressed farnesyl-diphosphate synthase genes.</title>
        <authorList>
            <person name="Cunillera N."/>
            <person name="Arro M."/>
            <person name="Delourme D."/>
            <person name="Karst F."/>
            <person name="Boronat A."/>
            <person name="Ferrer A."/>
        </authorList>
    </citation>
    <scope>NUCLEOTIDE SEQUENCE [GENOMIC DNA / MRNA]</scope>
    <source>
        <strain>cv. Columbia</strain>
    </source>
</reference>
<reference key="2">
    <citation type="journal article" date="1998" name="Nature">
        <title>Analysis of 1.9 Mb of contiguous sequence from chromosome 4 of Arabidopsis thaliana.</title>
        <authorList>
            <person name="Bevan M."/>
            <person name="Bancroft I."/>
            <person name="Bent E."/>
            <person name="Love K."/>
            <person name="Goodman H.M."/>
            <person name="Dean C."/>
            <person name="Bergkamp R."/>
            <person name="Dirkse W."/>
            <person name="van Staveren M."/>
            <person name="Stiekema W."/>
            <person name="Drost L."/>
            <person name="Ridley P."/>
            <person name="Hudson S.-A."/>
            <person name="Patel K."/>
            <person name="Murphy G."/>
            <person name="Piffanelli P."/>
            <person name="Wedler H."/>
            <person name="Wedler E."/>
            <person name="Wambutt R."/>
            <person name="Weitzenegger T."/>
            <person name="Pohl T."/>
            <person name="Terryn N."/>
            <person name="Gielen J."/>
            <person name="Villarroel R."/>
            <person name="De Clercq R."/>
            <person name="van Montagu M."/>
            <person name="Lecharny A."/>
            <person name="Aubourg S."/>
            <person name="Gy I."/>
            <person name="Kreis M."/>
            <person name="Lao N."/>
            <person name="Kavanagh T."/>
            <person name="Hempel S."/>
            <person name="Kotter P."/>
            <person name="Entian K.-D."/>
            <person name="Rieger M."/>
            <person name="Schaefer M."/>
            <person name="Funk B."/>
            <person name="Mueller-Auer S."/>
            <person name="Silvey M."/>
            <person name="James R."/>
            <person name="Monfort A."/>
            <person name="Pons A."/>
            <person name="Puigdomenech P."/>
            <person name="Douka A."/>
            <person name="Voukelatou E."/>
            <person name="Milioni D."/>
            <person name="Hatzopoulos P."/>
            <person name="Piravandi E."/>
            <person name="Obermaier B."/>
            <person name="Hilbert H."/>
            <person name="Duesterhoeft A."/>
            <person name="Moores T."/>
            <person name="Jones J.D.G."/>
            <person name="Eneva T."/>
            <person name="Palme K."/>
            <person name="Benes V."/>
            <person name="Rechmann S."/>
            <person name="Ansorge W."/>
            <person name="Cooke R."/>
            <person name="Berger C."/>
            <person name="Delseny M."/>
            <person name="Voet M."/>
            <person name="Volckaert G."/>
            <person name="Mewes H.-W."/>
            <person name="Klosterman S."/>
            <person name="Schueller C."/>
            <person name="Chalwatzis N."/>
        </authorList>
    </citation>
    <scope>NUCLEOTIDE SEQUENCE [LARGE SCALE GENOMIC DNA]</scope>
    <source>
        <strain>cv. Columbia</strain>
    </source>
</reference>
<reference key="3">
    <citation type="journal article" date="1999" name="Nature">
        <title>Sequence and analysis of chromosome 4 of the plant Arabidopsis thaliana.</title>
        <authorList>
            <person name="Mayer K.F.X."/>
            <person name="Schueller C."/>
            <person name="Wambutt R."/>
            <person name="Murphy G."/>
            <person name="Volckaert G."/>
            <person name="Pohl T."/>
            <person name="Duesterhoeft A."/>
            <person name="Stiekema W."/>
            <person name="Entian K.-D."/>
            <person name="Terryn N."/>
            <person name="Harris B."/>
            <person name="Ansorge W."/>
            <person name="Brandt P."/>
            <person name="Grivell L.A."/>
            <person name="Rieger M."/>
            <person name="Weichselgartner M."/>
            <person name="de Simone V."/>
            <person name="Obermaier B."/>
            <person name="Mache R."/>
            <person name="Mueller M."/>
            <person name="Kreis M."/>
            <person name="Delseny M."/>
            <person name="Puigdomenech P."/>
            <person name="Watson M."/>
            <person name="Schmidtheini T."/>
            <person name="Reichert B."/>
            <person name="Portetelle D."/>
            <person name="Perez-Alonso M."/>
            <person name="Boutry M."/>
            <person name="Bancroft I."/>
            <person name="Vos P."/>
            <person name="Hoheisel J."/>
            <person name="Zimmermann W."/>
            <person name="Wedler H."/>
            <person name="Ridley P."/>
            <person name="Langham S.-A."/>
            <person name="McCullagh B."/>
            <person name="Bilham L."/>
            <person name="Robben J."/>
            <person name="van der Schueren J."/>
            <person name="Grymonprez B."/>
            <person name="Chuang Y.-J."/>
            <person name="Vandenbussche F."/>
            <person name="Braeken M."/>
            <person name="Weltjens I."/>
            <person name="Voet M."/>
            <person name="Bastiaens I."/>
            <person name="Aert R."/>
            <person name="Defoor E."/>
            <person name="Weitzenegger T."/>
            <person name="Bothe G."/>
            <person name="Ramsperger U."/>
            <person name="Hilbert H."/>
            <person name="Braun M."/>
            <person name="Holzer E."/>
            <person name="Brandt A."/>
            <person name="Peters S."/>
            <person name="van Staveren M."/>
            <person name="Dirkse W."/>
            <person name="Mooijman P."/>
            <person name="Klein Lankhorst R."/>
            <person name="Rose M."/>
            <person name="Hauf J."/>
            <person name="Koetter P."/>
            <person name="Berneiser S."/>
            <person name="Hempel S."/>
            <person name="Feldpausch M."/>
            <person name="Lamberth S."/>
            <person name="Van den Daele H."/>
            <person name="De Keyser A."/>
            <person name="Buysshaert C."/>
            <person name="Gielen J."/>
            <person name="Villarroel R."/>
            <person name="De Clercq R."/>
            <person name="van Montagu M."/>
            <person name="Rogers J."/>
            <person name="Cronin A."/>
            <person name="Quail M.A."/>
            <person name="Bray-Allen S."/>
            <person name="Clark L."/>
            <person name="Doggett J."/>
            <person name="Hall S."/>
            <person name="Kay M."/>
            <person name="Lennard N."/>
            <person name="McLay K."/>
            <person name="Mayes R."/>
            <person name="Pettett A."/>
            <person name="Rajandream M.A."/>
            <person name="Lyne M."/>
            <person name="Benes V."/>
            <person name="Rechmann S."/>
            <person name="Borkova D."/>
            <person name="Bloecker H."/>
            <person name="Scharfe M."/>
            <person name="Grimm M."/>
            <person name="Loehnert T.-H."/>
            <person name="Dose S."/>
            <person name="de Haan M."/>
            <person name="Maarse A.C."/>
            <person name="Schaefer M."/>
            <person name="Mueller-Auer S."/>
            <person name="Gabel C."/>
            <person name="Fuchs M."/>
            <person name="Fartmann B."/>
            <person name="Granderath K."/>
            <person name="Dauner D."/>
            <person name="Herzl A."/>
            <person name="Neumann S."/>
            <person name="Argiriou A."/>
            <person name="Vitale D."/>
            <person name="Liguori R."/>
            <person name="Piravandi E."/>
            <person name="Massenet O."/>
            <person name="Quigley F."/>
            <person name="Clabauld G."/>
            <person name="Muendlein A."/>
            <person name="Felber R."/>
            <person name="Schnabl S."/>
            <person name="Hiller R."/>
            <person name="Schmidt W."/>
            <person name="Lecharny A."/>
            <person name="Aubourg S."/>
            <person name="Chefdor F."/>
            <person name="Cooke R."/>
            <person name="Berger C."/>
            <person name="Monfort A."/>
            <person name="Casacuberta E."/>
            <person name="Gibbons T."/>
            <person name="Weber N."/>
            <person name="Vandenbol M."/>
            <person name="Bargues M."/>
            <person name="Terol J."/>
            <person name="Torres A."/>
            <person name="Perez-Perez A."/>
            <person name="Purnelle B."/>
            <person name="Bent E."/>
            <person name="Johnson S."/>
            <person name="Tacon D."/>
            <person name="Jesse T."/>
            <person name="Heijnen L."/>
            <person name="Schwarz S."/>
            <person name="Scholler P."/>
            <person name="Heber S."/>
            <person name="Francs P."/>
            <person name="Bielke C."/>
            <person name="Frishman D."/>
            <person name="Haase D."/>
            <person name="Lemcke K."/>
            <person name="Mewes H.-W."/>
            <person name="Stocker S."/>
            <person name="Zaccaria P."/>
            <person name="Bevan M."/>
            <person name="Wilson R.K."/>
            <person name="de la Bastide M."/>
            <person name="Habermann K."/>
            <person name="Parnell L."/>
            <person name="Dedhia N."/>
            <person name="Gnoj L."/>
            <person name="Schutz K."/>
            <person name="Huang E."/>
            <person name="Spiegel L."/>
            <person name="Sekhon M."/>
            <person name="Murray J."/>
            <person name="Sheet P."/>
            <person name="Cordes M."/>
            <person name="Abu-Threideh J."/>
            <person name="Stoneking T."/>
            <person name="Kalicki J."/>
            <person name="Graves T."/>
            <person name="Harmon G."/>
            <person name="Edwards J."/>
            <person name="Latreille P."/>
            <person name="Courtney L."/>
            <person name="Cloud J."/>
            <person name="Abbott A."/>
            <person name="Scott K."/>
            <person name="Johnson D."/>
            <person name="Minx P."/>
            <person name="Bentley D."/>
            <person name="Fulton B."/>
            <person name="Miller N."/>
            <person name="Greco T."/>
            <person name="Kemp K."/>
            <person name="Kramer J."/>
            <person name="Fulton L."/>
            <person name="Mardis E."/>
            <person name="Dante M."/>
            <person name="Pepin K."/>
            <person name="Hillier L.W."/>
            <person name="Nelson J."/>
            <person name="Spieth J."/>
            <person name="Ryan E."/>
            <person name="Andrews S."/>
            <person name="Geisel C."/>
            <person name="Layman D."/>
            <person name="Du H."/>
            <person name="Ali J."/>
            <person name="Berghoff A."/>
            <person name="Jones K."/>
            <person name="Drone K."/>
            <person name="Cotton M."/>
            <person name="Joshu C."/>
            <person name="Antonoiu B."/>
            <person name="Zidanic M."/>
            <person name="Strong C."/>
            <person name="Sun H."/>
            <person name="Lamar B."/>
            <person name="Yordan C."/>
            <person name="Ma P."/>
            <person name="Zhong J."/>
            <person name="Preston R."/>
            <person name="Vil D."/>
            <person name="Shekher M."/>
            <person name="Matero A."/>
            <person name="Shah R."/>
            <person name="Swaby I.K."/>
            <person name="O'Shaughnessy A."/>
            <person name="Rodriguez M."/>
            <person name="Hoffman J."/>
            <person name="Till S."/>
            <person name="Granat S."/>
            <person name="Shohdy N."/>
            <person name="Hasegawa A."/>
            <person name="Hameed A."/>
            <person name="Lodhi M."/>
            <person name="Johnson A."/>
            <person name="Chen E."/>
            <person name="Marra M.A."/>
            <person name="Martienssen R."/>
            <person name="McCombie W.R."/>
        </authorList>
    </citation>
    <scope>NUCLEOTIDE SEQUENCE [LARGE SCALE GENOMIC DNA]</scope>
    <source>
        <strain>cv. Columbia</strain>
    </source>
</reference>
<reference key="4">
    <citation type="journal article" date="2017" name="Plant J.">
        <title>Araport11: a complete reannotation of the Arabidopsis thaliana reference genome.</title>
        <authorList>
            <person name="Cheng C.Y."/>
            <person name="Krishnakumar V."/>
            <person name="Chan A.P."/>
            <person name="Thibaud-Nissen F."/>
            <person name="Schobel S."/>
            <person name="Town C.D."/>
        </authorList>
    </citation>
    <scope>GENOME REANNOTATION</scope>
    <source>
        <strain>cv. Columbia</strain>
    </source>
</reference>
<reference key="5">
    <citation type="journal article" date="2003" name="Science">
        <title>Empirical analysis of transcriptional activity in the Arabidopsis genome.</title>
        <authorList>
            <person name="Yamada K."/>
            <person name="Lim J."/>
            <person name="Dale J.M."/>
            <person name="Chen H."/>
            <person name="Shinn P."/>
            <person name="Palm C.J."/>
            <person name="Southwick A.M."/>
            <person name="Wu H.C."/>
            <person name="Kim C.J."/>
            <person name="Nguyen M."/>
            <person name="Pham P.K."/>
            <person name="Cheuk R.F."/>
            <person name="Karlin-Newmann G."/>
            <person name="Liu S.X."/>
            <person name="Lam B."/>
            <person name="Sakano H."/>
            <person name="Wu T."/>
            <person name="Yu G."/>
            <person name="Miranda M."/>
            <person name="Quach H.L."/>
            <person name="Tripp M."/>
            <person name="Chang C.H."/>
            <person name="Lee J.M."/>
            <person name="Toriumi M.J."/>
            <person name="Chan M.M."/>
            <person name="Tang C.C."/>
            <person name="Onodera C.S."/>
            <person name="Deng J.M."/>
            <person name="Akiyama K."/>
            <person name="Ansari Y."/>
            <person name="Arakawa T."/>
            <person name="Banh J."/>
            <person name="Banno F."/>
            <person name="Bowser L."/>
            <person name="Brooks S.Y."/>
            <person name="Carninci P."/>
            <person name="Chao Q."/>
            <person name="Choy N."/>
            <person name="Enju A."/>
            <person name="Goldsmith A.D."/>
            <person name="Gurjal M."/>
            <person name="Hansen N.F."/>
            <person name="Hayashizaki Y."/>
            <person name="Johnson-Hopson C."/>
            <person name="Hsuan V.W."/>
            <person name="Iida K."/>
            <person name="Karnes M."/>
            <person name="Khan S."/>
            <person name="Koesema E."/>
            <person name="Ishida J."/>
            <person name="Jiang P.X."/>
            <person name="Jones T."/>
            <person name="Kawai J."/>
            <person name="Kamiya A."/>
            <person name="Meyers C."/>
            <person name="Nakajima M."/>
            <person name="Narusaka M."/>
            <person name="Seki M."/>
            <person name="Sakurai T."/>
            <person name="Satou M."/>
            <person name="Tamse R."/>
            <person name="Vaysberg M."/>
            <person name="Wallender E.K."/>
            <person name="Wong C."/>
            <person name="Yamamura Y."/>
            <person name="Yuan S."/>
            <person name="Shinozaki K."/>
            <person name="Davis R.W."/>
            <person name="Theologis A."/>
            <person name="Ecker J.R."/>
        </authorList>
    </citation>
    <scope>NUCLEOTIDE SEQUENCE [LARGE SCALE MRNA]</scope>
    <source>
        <strain>cv. Columbia</strain>
    </source>
</reference>
<organism>
    <name type="scientific">Arabidopsis thaliana</name>
    <name type="common">Mouse-ear cress</name>
    <dbReference type="NCBI Taxonomy" id="3702"/>
    <lineage>
        <taxon>Eukaryota</taxon>
        <taxon>Viridiplantae</taxon>
        <taxon>Streptophyta</taxon>
        <taxon>Embryophyta</taxon>
        <taxon>Tracheophyta</taxon>
        <taxon>Spermatophyta</taxon>
        <taxon>Magnoliopsida</taxon>
        <taxon>eudicotyledons</taxon>
        <taxon>Gunneridae</taxon>
        <taxon>Pentapetalae</taxon>
        <taxon>rosids</taxon>
        <taxon>malvids</taxon>
        <taxon>Brassicales</taxon>
        <taxon>Brassicaceae</taxon>
        <taxon>Camelineae</taxon>
        <taxon>Arabidopsis</taxon>
    </lineage>
</organism>
<proteinExistence type="evidence at transcript level"/>
<sequence length="342" mass="39826">MADLKSTFLDVYSVLKSDLLQDPSFEFTHESRQWLERMLDYNVRGGKLNRGLSVVDSYKLLKQGQDLTEKETFLSCALGWCIEWLQAYFLVLDDIMDNSVTRRGQPCWFRKPKVGMIAINDGILLRNHIHRILKKHFREMPYYVDLVDLFNEVEFQTACGQMIDLITTFDGEKDLSKYSLQIHRRIVEYKTAYYSFYLPVACALLMAGENLENHTDVKTVLVDMGIYFQVQDDYLDCFADPETLGKIGTDIEDFKCSWLVVKALERCSEEQTKILYENYGKAEPSNVAKVKALYKELDLEGAFMEYEKESYEKLTKLIEAHQSKAIQAVLKSFLAKIYKRQK</sequence>
<dbReference type="EC" id="2.5.1.10"/>
<dbReference type="EC" id="2.5.1.1"/>
<dbReference type="EMBL" id="L46350">
    <property type="protein sequence ID" value="AAB07247.1"/>
    <property type="molecule type" value="Genomic_DNA"/>
</dbReference>
<dbReference type="EMBL" id="L46349">
    <property type="protein sequence ID" value="AAB07248.1"/>
    <property type="molecule type" value="mRNA"/>
</dbReference>
<dbReference type="EMBL" id="Z97343">
    <property type="protein sequence ID" value="CAB10500.1"/>
    <property type="molecule type" value="Genomic_DNA"/>
</dbReference>
<dbReference type="EMBL" id="AL161545">
    <property type="protein sequence ID" value="CAB80990.1"/>
    <property type="molecule type" value="Genomic_DNA"/>
</dbReference>
<dbReference type="EMBL" id="CP002687">
    <property type="protein sequence ID" value="AEE83860.1"/>
    <property type="molecule type" value="Genomic_DNA"/>
</dbReference>
<dbReference type="EMBL" id="AY072207">
    <property type="protein sequence ID" value="AAL60028.1"/>
    <property type="molecule type" value="mRNA"/>
</dbReference>
<dbReference type="EMBL" id="AY117354">
    <property type="protein sequence ID" value="AAM51429.1"/>
    <property type="molecule type" value="mRNA"/>
</dbReference>
<dbReference type="PIR" id="S71182">
    <property type="entry name" value="S71182"/>
</dbReference>
<dbReference type="RefSeq" id="NP_193452.1">
    <molecule id="Q43315-1"/>
    <property type="nucleotide sequence ID" value="NM_117823.4"/>
</dbReference>
<dbReference type="SMR" id="Q43315"/>
<dbReference type="FunCoup" id="Q43315">
    <property type="interactions" value="3423"/>
</dbReference>
<dbReference type="STRING" id="3702.Q43315"/>
<dbReference type="iPTMnet" id="Q43315"/>
<dbReference type="PaxDb" id="3702-AT4G17190.1"/>
<dbReference type="ProteomicsDB" id="230545">
    <molecule id="Q43315-1"/>
</dbReference>
<dbReference type="EnsemblPlants" id="AT4G17190.1">
    <molecule id="Q43315-1"/>
    <property type="protein sequence ID" value="AT4G17190.1"/>
    <property type="gene ID" value="AT4G17190"/>
</dbReference>
<dbReference type="GeneID" id="827430"/>
<dbReference type="Gramene" id="AT4G17190.1">
    <molecule id="Q43315-1"/>
    <property type="protein sequence ID" value="AT4G17190.1"/>
    <property type="gene ID" value="AT4G17190"/>
</dbReference>
<dbReference type="KEGG" id="ath:AT4G17190"/>
<dbReference type="Araport" id="AT4G17190"/>
<dbReference type="TAIR" id="AT4G17190">
    <property type="gene designation" value="FPS2"/>
</dbReference>
<dbReference type="eggNOG" id="KOG0711">
    <property type="taxonomic scope" value="Eukaryota"/>
</dbReference>
<dbReference type="HOGENOM" id="CLU_028376_3_0_1"/>
<dbReference type="InParanoid" id="Q43315"/>
<dbReference type="OMA" id="THESRQW"/>
<dbReference type="PhylomeDB" id="Q43315"/>
<dbReference type="BioCyc" id="ARA:AT4G17190-MONOMER"/>
<dbReference type="BioCyc" id="MetaCyc:AT4G17190-MONOMER"/>
<dbReference type="UniPathway" id="UPA00259">
    <property type="reaction ID" value="UER00368"/>
</dbReference>
<dbReference type="UniPathway" id="UPA00260">
    <property type="reaction ID" value="UER00369"/>
</dbReference>
<dbReference type="CD-CODE" id="4299E36E">
    <property type="entry name" value="Nucleolus"/>
</dbReference>
<dbReference type="PRO" id="PR:Q43315"/>
<dbReference type="Proteomes" id="UP000006548">
    <property type="component" value="Chromosome 4"/>
</dbReference>
<dbReference type="ExpressionAtlas" id="Q43315">
    <property type="expression patterns" value="baseline and differential"/>
</dbReference>
<dbReference type="GO" id="GO:0005737">
    <property type="term" value="C:cytoplasm"/>
    <property type="evidence" value="ECO:0007669"/>
    <property type="project" value="UniProtKB-SubCell"/>
</dbReference>
<dbReference type="GO" id="GO:0004337">
    <property type="term" value="F:(2E,6E)-farnesyl diphosphate synthase activity"/>
    <property type="evidence" value="ECO:0000314"/>
    <property type="project" value="TAIR"/>
</dbReference>
<dbReference type="GO" id="GO:0004161">
    <property type="term" value="F:dimethylallyltranstransferase activity"/>
    <property type="evidence" value="ECO:0000314"/>
    <property type="project" value="TAIR"/>
</dbReference>
<dbReference type="GO" id="GO:0046872">
    <property type="term" value="F:metal ion binding"/>
    <property type="evidence" value="ECO:0007669"/>
    <property type="project" value="UniProtKB-KW"/>
</dbReference>
<dbReference type="GO" id="GO:0006695">
    <property type="term" value="P:cholesterol biosynthetic process"/>
    <property type="evidence" value="ECO:0007669"/>
    <property type="project" value="UniProtKB-KW"/>
</dbReference>
<dbReference type="GO" id="GO:0045337">
    <property type="term" value="P:farnesyl diphosphate biosynthetic process"/>
    <property type="evidence" value="ECO:0000314"/>
    <property type="project" value="TAIR"/>
</dbReference>
<dbReference type="GO" id="GO:0033384">
    <property type="term" value="P:geranyl diphosphate biosynthetic process"/>
    <property type="evidence" value="ECO:0007669"/>
    <property type="project" value="UniProtKB-UniPathway"/>
</dbReference>
<dbReference type="CDD" id="cd00685">
    <property type="entry name" value="Trans_IPPS_HT"/>
    <property type="match status" value="1"/>
</dbReference>
<dbReference type="FunFam" id="1.10.600.10:FF:000008">
    <property type="entry name" value="Farnesyl pyrophosphate synthase"/>
    <property type="match status" value="1"/>
</dbReference>
<dbReference type="Gene3D" id="1.10.600.10">
    <property type="entry name" value="Farnesyl Diphosphate Synthase"/>
    <property type="match status" value="1"/>
</dbReference>
<dbReference type="InterPro" id="IPR039702">
    <property type="entry name" value="FPS1-like"/>
</dbReference>
<dbReference type="InterPro" id="IPR008949">
    <property type="entry name" value="Isoprenoid_synthase_dom_sf"/>
</dbReference>
<dbReference type="InterPro" id="IPR000092">
    <property type="entry name" value="Polyprenyl_synt"/>
</dbReference>
<dbReference type="InterPro" id="IPR033749">
    <property type="entry name" value="Polyprenyl_synt_CS"/>
</dbReference>
<dbReference type="PANTHER" id="PTHR11525:SF0">
    <property type="entry name" value="FARNESYL PYROPHOSPHATE SYNTHASE"/>
    <property type="match status" value="1"/>
</dbReference>
<dbReference type="PANTHER" id="PTHR11525">
    <property type="entry name" value="FARNESYL-PYROPHOSPHATE SYNTHETASE"/>
    <property type="match status" value="1"/>
</dbReference>
<dbReference type="Pfam" id="PF00348">
    <property type="entry name" value="polyprenyl_synt"/>
    <property type="match status" value="1"/>
</dbReference>
<dbReference type="SFLD" id="SFLDS00005">
    <property type="entry name" value="Isoprenoid_Synthase_Type_I"/>
    <property type="match status" value="1"/>
</dbReference>
<dbReference type="SFLD" id="SFLDG01017">
    <property type="entry name" value="Polyprenyl_Transferase_Like"/>
    <property type="match status" value="1"/>
</dbReference>
<dbReference type="SUPFAM" id="SSF48576">
    <property type="entry name" value="Terpenoid synthases"/>
    <property type="match status" value="1"/>
</dbReference>
<dbReference type="PROSITE" id="PS00723">
    <property type="entry name" value="POLYPRENYL_SYNTHASE_1"/>
    <property type="match status" value="1"/>
</dbReference>
<dbReference type="PROSITE" id="PS00444">
    <property type="entry name" value="POLYPRENYL_SYNTHASE_2"/>
    <property type="match status" value="1"/>
</dbReference>
<keyword id="KW-0025">Alternative splicing</keyword>
<keyword id="KW-0152">Cholesterol biosynthesis</keyword>
<keyword id="KW-0153">Cholesterol metabolism</keyword>
<keyword id="KW-0963">Cytoplasm</keyword>
<keyword id="KW-0414">Isoprene biosynthesis</keyword>
<keyword id="KW-0444">Lipid biosynthesis</keyword>
<keyword id="KW-0443">Lipid metabolism</keyword>
<keyword id="KW-0460">Magnesium</keyword>
<keyword id="KW-0479">Metal-binding</keyword>
<keyword id="KW-1185">Reference proteome</keyword>
<keyword id="KW-0752">Steroid biosynthesis</keyword>
<keyword id="KW-0753">Steroid metabolism</keyword>
<keyword id="KW-0756">Sterol biosynthesis</keyword>
<keyword id="KW-1207">Sterol metabolism</keyword>
<keyword id="KW-0808">Transferase</keyword>
<name>FPPS2_ARATH</name>
<protein>
    <recommendedName>
        <fullName>Farnesyl pyrophosphate synthase 2</fullName>
        <shortName>FPP synthase 2</shortName>
        <shortName>FPS 2</shortName>
        <ecNumber>2.5.1.10</ecNumber>
    </recommendedName>
    <alternativeName>
        <fullName>(2E,6E)-farnesyl diphosphate synthase 2</fullName>
    </alternativeName>
    <alternativeName>
        <fullName>Dimethylallyltranstransferase 2</fullName>
        <ecNumber>2.5.1.1</ecNumber>
    </alternativeName>
    <alternativeName>
        <fullName>Farnesyl diphosphate synthase 2</fullName>
    </alternativeName>
    <alternativeName>
        <fullName>Geranyltranstransferase 2</fullName>
    </alternativeName>
</protein>